<feature type="chain" id="PRO_0000168286" description="Dihydroneopterin aldolase">
    <location>
        <begin position="1"/>
        <end position="84" status="greater than"/>
    </location>
</feature>
<feature type="binding site" evidence="2">
    <location>
        <position position="22"/>
    </location>
    <ligand>
        <name>substrate</name>
    </ligand>
</feature>
<feature type="binding site" evidence="2">
    <location>
        <position position="54"/>
    </location>
    <ligand>
        <name>substrate</name>
    </ligand>
</feature>
<feature type="binding site" evidence="2">
    <location>
        <begin position="73"/>
        <end position="74"/>
    </location>
    <ligand>
        <name>substrate</name>
    </ligand>
</feature>
<feature type="non-terminal residue">
    <location>
        <position position="84"/>
    </location>
</feature>
<gene>
    <name type="primary">folB</name>
    <name type="synonym">folQ</name>
</gene>
<sequence>MSDIIFLNGMRFYGYHGALHAENELGQIFIVDVTLKVDLTEAGKTDNVKDTVHYGEVFEDVKNIVEGPSCQLIEHLAERIAKRI</sequence>
<proteinExistence type="inferred from homology"/>
<organism>
    <name type="scientific">Staphylococcus haemolyticus</name>
    <dbReference type="NCBI Taxonomy" id="1283"/>
    <lineage>
        <taxon>Bacteria</taxon>
        <taxon>Bacillati</taxon>
        <taxon>Bacillota</taxon>
        <taxon>Bacilli</taxon>
        <taxon>Bacillales</taxon>
        <taxon>Staphylococcaceae</taxon>
        <taxon>Staphylococcus</taxon>
    </lineage>
</organism>
<accession>Q59920</accession>
<keyword id="KW-0289">Folate biosynthesis</keyword>
<keyword id="KW-0413">Isomerase</keyword>
<keyword id="KW-0456">Lyase</keyword>
<dbReference type="EC" id="4.1.2.25" evidence="1"/>
<dbReference type="EC" id="5.1.99.8" evidence="1"/>
<dbReference type="EMBL" id="U40768">
    <property type="protein sequence ID" value="AAC43584.1"/>
    <property type="status" value="ALT_INIT"/>
    <property type="molecule type" value="Genomic_DNA"/>
</dbReference>
<dbReference type="SMR" id="Q59920"/>
<dbReference type="STRING" id="1283.ShL2_02281"/>
<dbReference type="UniPathway" id="UPA00077">
    <property type="reaction ID" value="UER00154"/>
</dbReference>
<dbReference type="GO" id="GO:0005737">
    <property type="term" value="C:cytoplasm"/>
    <property type="evidence" value="ECO:0007669"/>
    <property type="project" value="TreeGrafter"/>
</dbReference>
<dbReference type="GO" id="GO:0004150">
    <property type="term" value="F:dihydroneopterin aldolase activity"/>
    <property type="evidence" value="ECO:0007669"/>
    <property type="project" value="UniProtKB-EC"/>
</dbReference>
<dbReference type="GO" id="GO:0016853">
    <property type="term" value="F:isomerase activity"/>
    <property type="evidence" value="ECO:0007669"/>
    <property type="project" value="UniProtKB-KW"/>
</dbReference>
<dbReference type="GO" id="GO:0046656">
    <property type="term" value="P:folic acid biosynthetic process"/>
    <property type="evidence" value="ECO:0007669"/>
    <property type="project" value="UniProtKB-KW"/>
</dbReference>
<dbReference type="GO" id="GO:0046654">
    <property type="term" value="P:tetrahydrofolate biosynthetic process"/>
    <property type="evidence" value="ECO:0007669"/>
    <property type="project" value="UniProtKB-UniPathway"/>
</dbReference>
<dbReference type="CDD" id="cd00534">
    <property type="entry name" value="DHNA_DHNTPE"/>
    <property type="match status" value="1"/>
</dbReference>
<dbReference type="Gene3D" id="3.30.1130.10">
    <property type="match status" value="1"/>
</dbReference>
<dbReference type="InterPro" id="IPR006156">
    <property type="entry name" value="Dihydroneopterin_aldolase"/>
</dbReference>
<dbReference type="InterPro" id="IPR006157">
    <property type="entry name" value="FolB_dom"/>
</dbReference>
<dbReference type="InterPro" id="IPR043133">
    <property type="entry name" value="GTP-CH-I_C/QueF"/>
</dbReference>
<dbReference type="NCBIfam" id="TIGR00525">
    <property type="entry name" value="folB"/>
    <property type="match status" value="1"/>
</dbReference>
<dbReference type="NCBIfam" id="TIGR00526">
    <property type="entry name" value="folB_dom"/>
    <property type="match status" value="1"/>
</dbReference>
<dbReference type="PANTHER" id="PTHR42844">
    <property type="entry name" value="DIHYDRONEOPTERIN ALDOLASE 1-RELATED"/>
    <property type="match status" value="1"/>
</dbReference>
<dbReference type="PANTHER" id="PTHR42844:SF1">
    <property type="entry name" value="DIHYDRONEOPTERIN ALDOLASE 1-RELATED"/>
    <property type="match status" value="1"/>
</dbReference>
<dbReference type="Pfam" id="PF02152">
    <property type="entry name" value="FolB"/>
    <property type="match status" value="1"/>
</dbReference>
<dbReference type="SMART" id="SM00905">
    <property type="entry name" value="FolB"/>
    <property type="match status" value="1"/>
</dbReference>
<dbReference type="SUPFAM" id="SSF55620">
    <property type="entry name" value="Tetrahydrobiopterin biosynthesis enzymes-like"/>
    <property type="match status" value="1"/>
</dbReference>
<name>FOLB_STAHA</name>
<evidence type="ECO:0000250" key="1">
    <source>
        <dbReference type="UniProtKB" id="P0AC16"/>
    </source>
</evidence>
<evidence type="ECO:0000250" key="2">
    <source>
        <dbReference type="UniProtKB" id="P56740"/>
    </source>
</evidence>
<evidence type="ECO:0000305" key="3"/>
<protein>
    <recommendedName>
        <fullName>Dihydroneopterin aldolase</fullName>
        <shortName>DHNA</shortName>
        <ecNumber evidence="1">4.1.2.25</ecNumber>
    </recommendedName>
    <alternativeName>
        <fullName>7,8-dihydroneopterin 2'-epimerase</fullName>
    </alternativeName>
    <alternativeName>
        <fullName>7,8-dihydroneopterin aldolase</fullName>
    </alternativeName>
    <alternativeName>
        <fullName>7,8-dihydroneopterin epimerase</fullName>
        <ecNumber evidence="1">5.1.99.8</ecNumber>
    </alternativeName>
    <alternativeName>
        <fullName>Dihydroneopterin epimerase</fullName>
    </alternativeName>
</protein>
<reference key="1">
    <citation type="journal article" date="1995" name="FEMS Microbiol. Lett.">
        <title>Functional cloning of the dihydropteroate synthase gene of Staphylococcus haemolyticus.</title>
        <authorList>
            <person name="Kellam P."/>
            <person name="Dallas W.S."/>
            <person name="Ballantine S.P."/>
            <person name="Delves C.J."/>
        </authorList>
    </citation>
    <scope>NUCLEOTIDE SEQUENCE [GENOMIC DNA]</scope>
</reference>
<comment type="function">
    <text evidence="2">Catalyzes the conversion of 7,8-dihydroneopterin to 6-hydroxymethyl-7,8-dihydropterin. Can also catalyze the epimerization of carbon 2' of dihydroneopterin to dihydromonapterin.</text>
</comment>
<comment type="catalytic activity">
    <reaction evidence="2">
        <text>7,8-dihydroneopterin = 6-hydroxymethyl-7,8-dihydropterin + glycolaldehyde</text>
        <dbReference type="Rhea" id="RHEA:10540"/>
        <dbReference type="ChEBI" id="CHEBI:17001"/>
        <dbReference type="ChEBI" id="CHEBI:17071"/>
        <dbReference type="ChEBI" id="CHEBI:44841"/>
        <dbReference type="EC" id="4.1.2.25"/>
    </reaction>
</comment>
<comment type="catalytic activity">
    <reaction evidence="1">
        <text>7,8-dihydroneopterin = 7,8-dihydromonapterin</text>
        <dbReference type="Rhea" id="RHEA:45328"/>
        <dbReference type="ChEBI" id="CHEBI:17001"/>
        <dbReference type="ChEBI" id="CHEBI:71175"/>
        <dbReference type="EC" id="5.1.99.8"/>
    </reaction>
</comment>
<comment type="pathway">
    <text>Cofactor biosynthesis; tetrahydrofolate biosynthesis; 2-amino-4-hydroxy-6-hydroxymethyl-7,8-dihydropteridine diphosphate from 7,8-dihydroneopterin triphosphate: step 3/4.</text>
</comment>
<comment type="similarity">
    <text evidence="3">Belongs to the DHNA family.</text>
</comment>
<comment type="sequence caution" evidence="3">
    <conflict type="erroneous initiation">
        <sequence resource="EMBL-CDS" id="AAC43584"/>
    </conflict>
    <text>Extended N-terminus.</text>
</comment>